<feature type="chain" id="PRO_0000306549" description="Small ribosomal subunit protein uS13">
    <location>
        <begin position="1"/>
        <end position="126"/>
    </location>
</feature>
<feature type="region of interest" description="Disordered" evidence="2">
    <location>
        <begin position="95"/>
        <end position="126"/>
    </location>
</feature>
<reference key="1">
    <citation type="journal article" date="2009" name="Genome Res.">
        <title>Complete genome of the cellulolytic thermophile Acidothermus cellulolyticus 11B provides insights into its ecophysiological and evolutionary adaptations.</title>
        <authorList>
            <person name="Barabote R.D."/>
            <person name="Xie G."/>
            <person name="Leu D.H."/>
            <person name="Normand P."/>
            <person name="Necsulea A."/>
            <person name="Daubin V."/>
            <person name="Medigue C."/>
            <person name="Adney W.S."/>
            <person name="Xu X.C."/>
            <person name="Lapidus A."/>
            <person name="Parales R.E."/>
            <person name="Detter C."/>
            <person name="Pujic P."/>
            <person name="Bruce D."/>
            <person name="Lavire C."/>
            <person name="Challacombe J.F."/>
            <person name="Brettin T.S."/>
            <person name="Berry A.M."/>
        </authorList>
    </citation>
    <scope>NUCLEOTIDE SEQUENCE [LARGE SCALE GENOMIC DNA]</scope>
    <source>
        <strain>ATCC 43068 / DSM 8971 / 11B</strain>
    </source>
</reference>
<dbReference type="EMBL" id="CP000481">
    <property type="protein sequence ID" value="ABK52105.1"/>
    <property type="molecule type" value="Genomic_DNA"/>
</dbReference>
<dbReference type="RefSeq" id="WP_011719168.1">
    <property type="nucleotide sequence ID" value="NC_008578.1"/>
</dbReference>
<dbReference type="SMR" id="A0LRP5"/>
<dbReference type="FunCoup" id="A0LRP5">
    <property type="interactions" value="372"/>
</dbReference>
<dbReference type="STRING" id="351607.Acel_0331"/>
<dbReference type="KEGG" id="ace:Acel_0331"/>
<dbReference type="eggNOG" id="COG0099">
    <property type="taxonomic scope" value="Bacteria"/>
</dbReference>
<dbReference type="HOGENOM" id="CLU_103849_1_2_11"/>
<dbReference type="InParanoid" id="A0LRP5"/>
<dbReference type="OrthoDB" id="9803610at2"/>
<dbReference type="Proteomes" id="UP000008221">
    <property type="component" value="Chromosome"/>
</dbReference>
<dbReference type="GO" id="GO:0005829">
    <property type="term" value="C:cytosol"/>
    <property type="evidence" value="ECO:0007669"/>
    <property type="project" value="TreeGrafter"/>
</dbReference>
<dbReference type="GO" id="GO:0015935">
    <property type="term" value="C:small ribosomal subunit"/>
    <property type="evidence" value="ECO:0007669"/>
    <property type="project" value="TreeGrafter"/>
</dbReference>
<dbReference type="GO" id="GO:0019843">
    <property type="term" value="F:rRNA binding"/>
    <property type="evidence" value="ECO:0007669"/>
    <property type="project" value="UniProtKB-UniRule"/>
</dbReference>
<dbReference type="GO" id="GO:0003735">
    <property type="term" value="F:structural constituent of ribosome"/>
    <property type="evidence" value="ECO:0007669"/>
    <property type="project" value="InterPro"/>
</dbReference>
<dbReference type="GO" id="GO:0000049">
    <property type="term" value="F:tRNA binding"/>
    <property type="evidence" value="ECO:0007669"/>
    <property type="project" value="UniProtKB-UniRule"/>
</dbReference>
<dbReference type="GO" id="GO:0006412">
    <property type="term" value="P:translation"/>
    <property type="evidence" value="ECO:0007669"/>
    <property type="project" value="UniProtKB-UniRule"/>
</dbReference>
<dbReference type="FunFam" id="1.10.8.50:FF:000001">
    <property type="entry name" value="30S ribosomal protein S13"/>
    <property type="match status" value="1"/>
</dbReference>
<dbReference type="FunFam" id="4.10.910.10:FF:000001">
    <property type="entry name" value="30S ribosomal protein S13"/>
    <property type="match status" value="1"/>
</dbReference>
<dbReference type="Gene3D" id="1.10.8.50">
    <property type="match status" value="1"/>
</dbReference>
<dbReference type="Gene3D" id="4.10.910.10">
    <property type="entry name" value="30s ribosomal protein s13, domain 2"/>
    <property type="match status" value="1"/>
</dbReference>
<dbReference type="HAMAP" id="MF_01315">
    <property type="entry name" value="Ribosomal_uS13"/>
    <property type="match status" value="1"/>
</dbReference>
<dbReference type="InterPro" id="IPR027437">
    <property type="entry name" value="Rbsml_uS13_C"/>
</dbReference>
<dbReference type="InterPro" id="IPR001892">
    <property type="entry name" value="Ribosomal_uS13"/>
</dbReference>
<dbReference type="InterPro" id="IPR010979">
    <property type="entry name" value="Ribosomal_uS13-like_H2TH"/>
</dbReference>
<dbReference type="InterPro" id="IPR019980">
    <property type="entry name" value="Ribosomal_uS13_bac-type"/>
</dbReference>
<dbReference type="InterPro" id="IPR018269">
    <property type="entry name" value="Ribosomal_uS13_CS"/>
</dbReference>
<dbReference type="NCBIfam" id="TIGR03631">
    <property type="entry name" value="uS13_bact"/>
    <property type="match status" value="1"/>
</dbReference>
<dbReference type="PANTHER" id="PTHR10871">
    <property type="entry name" value="30S RIBOSOMAL PROTEIN S13/40S RIBOSOMAL PROTEIN S18"/>
    <property type="match status" value="1"/>
</dbReference>
<dbReference type="PANTHER" id="PTHR10871:SF1">
    <property type="entry name" value="SMALL RIBOSOMAL SUBUNIT PROTEIN US13M"/>
    <property type="match status" value="1"/>
</dbReference>
<dbReference type="Pfam" id="PF00416">
    <property type="entry name" value="Ribosomal_S13"/>
    <property type="match status" value="1"/>
</dbReference>
<dbReference type="PIRSF" id="PIRSF002134">
    <property type="entry name" value="Ribosomal_S13"/>
    <property type="match status" value="1"/>
</dbReference>
<dbReference type="SUPFAM" id="SSF46946">
    <property type="entry name" value="S13-like H2TH domain"/>
    <property type="match status" value="1"/>
</dbReference>
<dbReference type="PROSITE" id="PS00646">
    <property type="entry name" value="RIBOSOMAL_S13_1"/>
    <property type="match status" value="1"/>
</dbReference>
<dbReference type="PROSITE" id="PS50159">
    <property type="entry name" value="RIBOSOMAL_S13_2"/>
    <property type="match status" value="1"/>
</dbReference>
<accession>A0LRP5</accession>
<protein>
    <recommendedName>
        <fullName evidence="1">Small ribosomal subunit protein uS13</fullName>
    </recommendedName>
    <alternativeName>
        <fullName evidence="3">30S ribosomal protein S13</fullName>
    </alternativeName>
</protein>
<sequence length="126" mass="14399">MARLVGVDLPRDKRLEVALTYIYGIGRTRALETLAATGISPDLRVRDLTDDDLLKLREWIEANYRVEGDLRREVAADIRRKIEIGCYQGIRHRRGLPVRGQRTHTNARTRKGPRKTVAGKKKPGKK</sequence>
<proteinExistence type="inferred from homology"/>
<gene>
    <name evidence="1" type="primary">rpsM</name>
    <name type="ordered locus">Acel_0331</name>
</gene>
<keyword id="KW-1185">Reference proteome</keyword>
<keyword id="KW-0687">Ribonucleoprotein</keyword>
<keyword id="KW-0689">Ribosomal protein</keyword>
<keyword id="KW-0694">RNA-binding</keyword>
<keyword id="KW-0699">rRNA-binding</keyword>
<keyword id="KW-0820">tRNA-binding</keyword>
<name>RS13_ACIC1</name>
<organism>
    <name type="scientific">Acidothermus cellulolyticus (strain ATCC 43068 / DSM 8971 / 11B)</name>
    <dbReference type="NCBI Taxonomy" id="351607"/>
    <lineage>
        <taxon>Bacteria</taxon>
        <taxon>Bacillati</taxon>
        <taxon>Actinomycetota</taxon>
        <taxon>Actinomycetes</taxon>
        <taxon>Acidothermales</taxon>
        <taxon>Acidothermaceae</taxon>
        <taxon>Acidothermus</taxon>
    </lineage>
</organism>
<evidence type="ECO:0000255" key="1">
    <source>
        <dbReference type="HAMAP-Rule" id="MF_01315"/>
    </source>
</evidence>
<evidence type="ECO:0000256" key="2">
    <source>
        <dbReference type="SAM" id="MobiDB-lite"/>
    </source>
</evidence>
<evidence type="ECO:0000305" key="3"/>
<comment type="function">
    <text evidence="1">Located at the top of the head of the 30S subunit, it contacts several helices of the 16S rRNA. In the 70S ribosome it contacts the 23S rRNA (bridge B1a) and protein L5 of the 50S subunit (bridge B1b), connecting the 2 subunits; these bridges are implicated in subunit movement. Contacts the tRNAs in the A and P-sites.</text>
</comment>
<comment type="subunit">
    <text evidence="1">Part of the 30S ribosomal subunit. Forms a loose heterodimer with protein S19. Forms two bridges to the 50S subunit in the 70S ribosome.</text>
</comment>
<comment type="similarity">
    <text evidence="1">Belongs to the universal ribosomal protein uS13 family.</text>
</comment>